<feature type="chain" id="PRO_1000074487" description="Crossover junction endodeoxyribonuclease RuvC">
    <location>
        <begin position="1"/>
        <end position="171"/>
    </location>
</feature>
<feature type="active site" evidence="1">
    <location>
        <position position="7"/>
    </location>
</feature>
<feature type="active site" evidence="1">
    <location>
        <position position="66"/>
    </location>
</feature>
<feature type="active site" evidence="1">
    <location>
        <position position="138"/>
    </location>
</feature>
<feature type="binding site" evidence="1">
    <location>
        <position position="7"/>
    </location>
    <ligand>
        <name>Mg(2+)</name>
        <dbReference type="ChEBI" id="CHEBI:18420"/>
        <label>1</label>
    </ligand>
</feature>
<feature type="binding site" evidence="1">
    <location>
        <position position="66"/>
    </location>
    <ligand>
        <name>Mg(2+)</name>
        <dbReference type="ChEBI" id="CHEBI:18420"/>
        <label>2</label>
    </ligand>
</feature>
<feature type="binding site" evidence="1">
    <location>
        <position position="138"/>
    </location>
    <ligand>
        <name>Mg(2+)</name>
        <dbReference type="ChEBI" id="CHEBI:18420"/>
        <label>1</label>
    </ligand>
</feature>
<organism>
    <name type="scientific">Francisella philomiragia subsp. philomiragia (strain ATCC 25017 / CCUG 19701 / FSC 153 / O#319-036)</name>
    <dbReference type="NCBI Taxonomy" id="484022"/>
    <lineage>
        <taxon>Bacteria</taxon>
        <taxon>Pseudomonadati</taxon>
        <taxon>Pseudomonadota</taxon>
        <taxon>Gammaproteobacteria</taxon>
        <taxon>Thiotrichales</taxon>
        <taxon>Francisellaceae</taxon>
        <taxon>Francisella</taxon>
    </lineage>
</organism>
<accession>B0TZD9</accession>
<reference key="1">
    <citation type="submission" date="2007-12" db="EMBL/GenBank/DDBJ databases">
        <title>Complete sequence of chromosome of Francisella philomiragia subsp. philomiragia ATCC 25017.</title>
        <authorList>
            <consortium name="US DOE Joint Genome Institute"/>
            <person name="Copeland A."/>
            <person name="Lucas S."/>
            <person name="Lapidus A."/>
            <person name="Barry K."/>
            <person name="Detter J.C."/>
            <person name="Glavina del Rio T."/>
            <person name="Hammon N."/>
            <person name="Israni S."/>
            <person name="Dalin E."/>
            <person name="Tice H."/>
            <person name="Pitluck S."/>
            <person name="Chain P."/>
            <person name="Malfatti S."/>
            <person name="Shin M."/>
            <person name="Vergez L."/>
            <person name="Schmutz J."/>
            <person name="Larimer F."/>
            <person name="Land M."/>
            <person name="Hauser L."/>
            <person name="Richardson P."/>
        </authorList>
    </citation>
    <scope>NUCLEOTIDE SEQUENCE [LARGE SCALE GENOMIC DNA]</scope>
    <source>
        <strain>ATCC 25017 / CCUG 19701 / FSC 153 / O#319-036</strain>
    </source>
</reference>
<dbReference type="EC" id="3.1.21.10" evidence="1"/>
<dbReference type="EMBL" id="CP000937">
    <property type="protein sequence ID" value="ABZ87792.1"/>
    <property type="molecule type" value="Genomic_DNA"/>
</dbReference>
<dbReference type="SMR" id="B0TZD9"/>
<dbReference type="KEGG" id="fph:Fphi_1566"/>
<dbReference type="eggNOG" id="COG0817">
    <property type="taxonomic scope" value="Bacteria"/>
</dbReference>
<dbReference type="HOGENOM" id="CLU_091257_2_1_6"/>
<dbReference type="GO" id="GO:0005737">
    <property type="term" value="C:cytoplasm"/>
    <property type="evidence" value="ECO:0007669"/>
    <property type="project" value="UniProtKB-SubCell"/>
</dbReference>
<dbReference type="GO" id="GO:0048476">
    <property type="term" value="C:Holliday junction resolvase complex"/>
    <property type="evidence" value="ECO:0007669"/>
    <property type="project" value="UniProtKB-UniRule"/>
</dbReference>
<dbReference type="GO" id="GO:0008821">
    <property type="term" value="F:crossover junction DNA endonuclease activity"/>
    <property type="evidence" value="ECO:0007669"/>
    <property type="project" value="UniProtKB-UniRule"/>
</dbReference>
<dbReference type="GO" id="GO:0003677">
    <property type="term" value="F:DNA binding"/>
    <property type="evidence" value="ECO:0007669"/>
    <property type="project" value="UniProtKB-KW"/>
</dbReference>
<dbReference type="GO" id="GO:0000287">
    <property type="term" value="F:magnesium ion binding"/>
    <property type="evidence" value="ECO:0007669"/>
    <property type="project" value="UniProtKB-UniRule"/>
</dbReference>
<dbReference type="GO" id="GO:0006310">
    <property type="term" value="P:DNA recombination"/>
    <property type="evidence" value="ECO:0007669"/>
    <property type="project" value="UniProtKB-UniRule"/>
</dbReference>
<dbReference type="GO" id="GO:0006281">
    <property type="term" value="P:DNA repair"/>
    <property type="evidence" value="ECO:0007669"/>
    <property type="project" value="UniProtKB-UniRule"/>
</dbReference>
<dbReference type="CDD" id="cd16962">
    <property type="entry name" value="RuvC"/>
    <property type="match status" value="1"/>
</dbReference>
<dbReference type="FunFam" id="3.30.420.10:FF:000002">
    <property type="entry name" value="Crossover junction endodeoxyribonuclease RuvC"/>
    <property type="match status" value="1"/>
</dbReference>
<dbReference type="Gene3D" id="3.30.420.10">
    <property type="entry name" value="Ribonuclease H-like superfamily/Ribonuclease H"/>
    <property type="match status" value="1"/>
</dbReference>
<dbReference type="HAMAP" id="MF_00034">
    <property type="entry name" value="RuvC"/>
    <property type="match status" value="1"/>
</dbReference>
<dbReference type="InterPro" id="IPR012337">
    <property type="entry name" value="RNaseH-like_sf"/>
</dbReference>
<dbReference type="InterPro" id="IPR036397">
    <property type="entry name" value="RNaseH_sf"/>
</dbReference>
<dbReference type="InterPro" id="IPR020563">
    <property type="entry name" value="X-over_junc_endoDNase_Mg_BS"/>
</dbReference>
<dbReference type="InterPro" id="IPR002176">
    <property type="entry name" value="X-over_junc_endoDNase_RuvC"/>
</dbReference>
<dbReference type="NCBIfam" id="NF000711">
    <property type="entry name" value="PRK00039.2-1"/>
    <property type="match status" value="1"/>
</dbReference>
<dbReference type="NCBIfam" id="TIGR00228">
    <property type="entry name" value="ruvC"/>
    <property type="match status" value="1"/>
</dbReference>
<dbReference type="PANTHER" id="PTHR30194">
    <property type="entry name" value="CROSSOVER JUNCTION ENDODEOXYRIBONUCLEASE RUVC"/>
    <property type="match status" value="1"/>
</dbReference>
<dbReference type="PANTHER" id="PTHR30194:SF3">
    <property type="entry name" value="CROSSOVER JUNCTION ENDODEOXYRIBONUCLEASE RUVC"/>
    <property type="match status" value="1"/>
</dbReference>
<dbReference type="Pfam" id="PF02075">
    <property type="entry name" value="RuvC"/>
    <property type="match status" value="1"/>
</dbReference>
<dbReference type="PRINTS" id="PR00696">
    <property type="entry name" value="RSOLVASERUVC"/>
</dbReference>
<dbReference type="SUPFAM" id="SSF53098">
    <property type="entry name" value="Ribonuclease H-like"/>
    <property type="match status" value="1"/>
</dbReference>
<dbReference type="PROSITE" id="PS01321">
    <property type="entry name" value="RUVC"/>
    <property type="match status" value="1"/>
</dbReference>
<comment type="function">
    <text evidence="1">The RuvA-RuvB-RuvC complex processes Holliday junction (HJ) DNA during genetic recombination and DNA repair. Endonuclease that resolves HJ intermediates. Cleaves cruciform DNA by making single-stranded nicks across the HJ at symmetrical positions within the homologous arms, yielding a 5'-phosphate and a 3'-hydroxyl group; requires a central core of homology in the junction. The consensus cleavage sequence is 5'-(A/T)TT(C/G)-3'. Cleavage occurs on the 3'-side of the TT dinucleotide at the point of strand exchange. HJ branch migration catalyzed by RuvA-RuvB allows RuvC to scan DNA until it finds its consensus sequence, where it cleaves and resolves the cruciform DNA.</text>
</comment>
<comment type="catalytic activity">
    <reaction evidence="1">
        <text>Endonucleolytic cleavage at a junction such as a reciprocal single-stranded crossover between two homologous DNA duplexes (Holliday junction).</text>
        <dbReference type="EC" id="3.1.21.10"/>
    </reaction>
</comment>
<comment type="cofactor">
    <cofactor evidence="1">
        <name>Mg(2+)</name>
        <dbReference type="ChEBI" id="CHEBI:18420"/>
    </cofactor>
    <text evidence="1">Binds 2 Mg(2+) ion per subunit.</text>
</comment>
<comment type="subunit">
    <text evidence="1">Homodimer which binds Holliday junction (HJ) DNA. The HJ becomes 2-fold symmetrical on binding to RuvC with unstacked arms; it has a different conformation from HJ DNA in complex with RuvA. In the full resolvosome a probable DNA-RuvA(4)-RuvB(12)-RuvC(2) complex forms which resolves the HJ.</text>
</comment>
<comment type="subcellular location">
    <subcellularLocation>
        <location evidence="1">Cytoplasm</location>
    </subcellularLocation>
</comment>
<comment type="similarity">
    <text evidence="1">Belongs to the RuvC family.</text>
</comment>
<name>RUVC_FRAP2</name>
<protein>
    <recommendedName>
        <fullName evidence="1">Crossover junction endodeoxyribonuclease RuvC</fullName>
        <ecNumber evidence="1">3.1.21.10</ecNumber>
    </recommendedName>
    <alternativeName>
        <fullName evidence="1">Holliday junction nuclease RuvC</fullName>
    </alternativeName>
    <alternativeName>
        <fullName evidence="1">Holliday junction resolvase RuvC</fullName>
    </alternativeName>
</protein>
<gene>
    <name evidence="1" type="primary">ruvC</name>
    <name type="ordered locus">Fphi_1566</name>
</gene>
<sequence length="171" mass="18237">MVILGIDPGSRITGFGIIKIHDNKLYYVASGCIRITETGTARRLKQIADGITEVVNTYAPTESAIEQIFMFQNPGAALKLGQARGVAMCTLAINNLEVSEYSAKQIKQAVVGTGGAAKSQVQHMVQSILGLSKKPPEDAADALAIAICHYHSSKSLARIAGASRVSQKRIR</sequence>
<keyword id="KW-0963">Cytoplasm</keyword>
<keyword id="KW-0227">DNA damage</keyword>
<keyword id="KW-0233">DNA recombination</keyword>
<keyword id="KW-0234">DNA repair</keyword>
<keyword id="KW-0238">DNA-binding</keyword>
<keyword id="KW-0255">Endonuclease</keyword>
<keyword id="KW-0378">Hydrolase</keyword>
<keyword id="KW-0460">Magnesium</keyword>
<keyword id="KW-0479">Metal-binding</keyword>
<keyword id="KW-0540">Nuclease</keyword>
<proteinExistence type="inferred from homology"/>
<evidence type="ECO:0000255" key="1">
    <source>
        <dbReference type="HAMAP-Rule" id="MF_00034"/>
    </source>
</evidence>